<keyword id="KW-1185">Reference proteome</keyword>
<keyword id="KW-0687">Ribonucleoprotein</keyword>
<keyword id="KW-0689">Ribosomal protein</keyword>
<keyword id="KW-0694">RNA-binding</keyword>
<keyword id="KW-0699">rRNA-binding</keyword>
<keyword id="KW-0820">tRNA-binding</keyword>
<reference key="1">
    <citation type="journal article" date="2008" name="Appl. Environ. Microbiol.">
        <title>The genome of Polaromonas sp. strain JS666: insights into the evolution of a hydrocarbon- and xenobiotic-degrading bacterium, and features of relevance to biotechnology.</title>
        <authorList>
            <person name="Mattes T.E."/>
            <person name="Alexander A.K."/>
            <person name="Richardson P.M."/>
            <person name="Munk A.C."/>
            <person name="Han C.S."/>
            <person name="Stothard P."/>
            <person name="Coleman N.V."/>
        </authorList>
    </citation>
    <scope>NUCLEOTIDE SEQUENCE [LARGE SCALE GENOMIC DNA]</scope>
    <source>
        <strain>JS666 / ATCC BAA-500</strain>
    </source>
</reference>
<protein>
    <recommendedName>
        <fullName evidence="1">Large ribosomal subunit protein uL16</fullName>
    </recommendedName>
    <alternativeName>
        <fullName evidence="3">50S ribosomal protein L16</fullName>
    </alternativeName>
</protein>
<name>RL16_POLSJ</name>
<gene>
    <name evidence="1" type="primary">rplP</name>
    <name type="ordered locus">Bpro_0263</name>
</gene>
<sequence length="138" mass="15536">MLQPARRKYRKEQKGRNTGVATRGNSVAFGDFGLKCTDRGRLTARQIEAARRAISRHVKRGGRIWIRVFPDKPISQKPAEVRMGNGKGNPEYYVAEIQPGKIVFEIVGVPEELAREAFRLASAKLPLRTTFVSRMIGQ</sequence>
<comment type="function">
    <text evidence="1">Binds 23S rRNA and is also seen to make contacts with the A and possibly P site tRNAs.</text>
</comment>
<comment type="subunit">
    <text evidence="1">Part of the 50S ribosomal subunit.</text>
</comment>
<comment type="similarity">
    <text evidence="1">Belongs to the universal ribosomal protein uL16 family.</text>
</comment>
<dbReference type="EMBL" id="CP000316">
    <property type="protein sequence ID" value="ABE42228.1"/>
    <property type="molecule type" value="Genomic_DNA"/>
</dbReference>
<dbReference type="RefSeq" id="WP_011481235.1">
    <property type="nucleotide sequence ID" value="NC_007948.1"/>
</dbReference>
<dbReference type="SMR" id="Q12GW4"/>
<dbReference type="STRING" id="296591.Bpro_0263"/>
<dbReference type="KEGG" id="pol:Bpro_0263"/>
<dbReference type="eggNOG" id="COG0197">
    <property type="taxonomic scope" value="Bacteria"/>
</dbReference>
<dbReference type="HOGENOM" id="CLU_078858_2_1_4"/>
<dbReference type="OrthoDB" id="9802589at2"/>
<dbReference type="Proteomes" id="UP000001983">
    <property type="component" value="Chromosome"/>
</dbReference>
<dbReference type="GO" id="GO:0022625">
    <property type="term" value="C:cytosolic large ribosomal subunit"/>
    <property type="evidence" value="ECO:0007669"/>
    <property type="project" value="TreeGrafter"/>
</dbReference>
<dbReference type="GO" id="GO:0019843">
    <property type="term" value="F:rRNA binding"/>
    <property type="evidence" value="ECO:0007669"/>
    <property type="project" value="UniProtKB-UniRule"/>
</dbReference>
<dbReference type="GO" id="GO:0003735">
    <property type="term" value="F:structural constituent of ribosome"/>
    <property type="evidence" value="ECO:0007669"/>
    <property type="project" value="InterPro"/>
</dbReference>
<dbReference type="GO" id="GO:0000049">
    <property type="term" value="F:tRNA binding"/>
    <property type="evidence" value="ECO:0007669"/>
    <property type="project" value="UniProtKB-KW"/>
</dbReference>
<dbReference type="GO" id="GO:0006412">
    <property type="term" value="P:translation"/>
    <property type="evidence" value="ECO:0007669"/>
    <property type="project" value="UniProtKB-UniRule"/>
</dbReference>
<dbReference type="CDD" id="cd01433">
    <property type="entry name" value="Ribosomal_L16_L10e"/>
    <property type="match status" value="1"/>
</dbReference>
<dbReference type="FunFam" id="3.90.1170.10:FF:000001">
    <property type="entry name" value="50S ribosomal protein L16"/>
    <property type="match status" value="1"/>
</dbReference>
<dbReference type="Gene3D" id="3.90.1170.10">
    <property type="entry name" value="Ribosomal protein L10e/L16"/>
    <property type="match status" value="1"/>
</dbReference>
<dbReference type="HAMAP" id="MF_01342">
    <property type="entry name" value="Ribosomal_uL16"/>
    <property type="match status" value="1"/>
</dbReference>
<dbReference type="InterPro" id="IPR047873">
    <property type="entry name" value="Ribosomal_uL16"/>
</dbReference>
<dbReference type="InterPro" id="IPR000114">
    <property type="entry name" value="Ribosomal_uL16_bact-type"/>
</dbReference>
<dbReference type="InterPro" id="IPR020798">
    <property type="entry name" value="Ribosomal_uL16_CS"/>
</dbReference>
<dbReference type="InterPro" id="IPR016180">
    <property type="entry name" value="Ribosomal_uL16_dom"/>
</dbReference>
<dbReference type="InterPro" id="IPR036920">
    <property type="entry name" value="Ribosomal_uL16_sf"/>
</dbReference>
<dbReference type="NCBIfam" id="TIGR01164">
    <property type="entry name" value="rplP_bact"/>
    <property type="match status" value="1"/>
</dbReference>
<dbReference type="PANTHER" id="PTHR12220">
    <property type="entry name" value="50S/60S RIBOSOMAL PROTEIN L16"/>
    <property type="match status" value="1"/>
</dbReference>
<dbReference type="PANTHER" id="PTHR12220:SF13">
    <property type="entry name" value="LARGE RIBOSOMAL SUBUNIT PROTEIN UL16M"/>
    <property type="match status" value="1"/>
</dbReference>
<dbReference type="Pfam" id="PF00252">
    <property type="entry name" value="Ribosomal_L16"/>
    <property type="match status" value="1"/>
</dbReference>
<dbReference type="PRINTS" id="PR00060">
    <property type="entry name" value="RIBOSOMALL16"/>
</dbReference>
<dbReference type="SUPFAM" id="SSF54686">
    <property type="entry name" value="Ribosomal protein L16p/L10e"/>
    <property type="match status" value="1"/>
</dbReference>
<dbReference type="PROSITE" id="PS00586">
    <property type="entry name" value="RIBOSOMAL_L16_1"/>
    <property type="match status" value="1"/>
</dbReference>
<feature type="chain" id="PRO_1000054673" description="Large ribosomal subunit protein uL16">
    <location>
        <begin position="1"/>
        <end position="138"/>
    </location>
</feature>
<feature type="region of interest" description="Disordered" evidence="2">
    <location>
        <begin position="1"/>
        <end position="22"/>
    </location>
</feature>
<feature type="compositionally biased region" description="Basic residues" evidence="2">
    <location>
        <begin position="1"/>
        <end position="13"/>
    </location>
</feature>
<organism>
    <name type="scientific">Polaromonas sp. (strain JS666 / ATCC BAA-500)</name>
    <dbReference type="NCBI Taxonomy" id="296591"/>
    <lineage>
        <taxon>Bacteria</taxon>
        <taxon>Pseudomonadati</taxon>
        <taxon>Pseudomonadota</taxon>
        <taxon>Betaproteobacteria</taxon>
        <taxon>Burkholderiales</taxon>
        <taxon>Comamonadaceae</taxon>
        <taxon>Polaromonas</taxon>
    </lineage>
</organism>
<accession>Q12GW4</accession>
<proteinExistence type="inferred from homology"/>
<evidence type="ECO:0000255" key="1">
    <source>
        <dbReference type="HAMAP-Rule" id="MF_01342"/>
    </source>
</evidence>
<evidence type="ECO:0000256" key="2">
    <source>
        <dbReference type="SAM" id="MobiDB-lite"/>
    </source>
</evidence>
<evidence type="ECO:0000305" key="3"/>